<reference key="1">
    <citation type="journal article" date="2013" name="Nature">
        <title>The zebrafish reference genome sequence and its relationship to the human genome.</title>
        <authorList>
            <person name="Howe K."/>
            <person name="Clark M.D."/>
            <person name="Torroja C.F."/>
            <person name="Torrance J."/>
            <person name="Berthelot C."/>
            <person name="Muffato M."/>
            <person name="Collins J.E."/>
            <person name="Humphray S."/>
            <person name="McLaren K."/>
            <person name="Matthews L."/>
            <person name="McLaren S."/>
            <person name="Sealy I."/>
            <person name="Caccamo M."/>
            <person name="Churcher C."/>
            <person name="Scott C."/>
            <person name="Barrett J.C."/>
            <person name="Koch R."/>
            <person name="Rauch G.J."/>
            <person name="White S."/>
            <person name="Chow W."/>
            <person name="Kilian B."/>
            <person name="Quintais L.T."/>
            <person name="Guerra-Assuncao J.A."/>
            <person name="Zhou Y."/>
            <person name="Gu Y."/>
            <person name="Yen J."/>
            <person name="Vogel J.H."/>
            <person name="Eyre T."/>
            <person name="Redmond S."/>
            <person name="Banerjee R."/>
            <person name="Chi J."/>
            <person name="Fu B."/>
            <person name="Langley E."/>
            <person name="Maguire S.F."/>
            <person name="Laird G.K."/>
            <person name="Lloyd D."/>
            <person name="Kenyon E."/>
            <person name="Donaldson S."/>
            <person name="Sehra H."/>
            <person name="Almeida-King J."/>
            <person name="Loveland J."/>
            <person name="Trevanion S."/>
            <person name="Jones M."/>
            <person name="Quail M."/>
            <person name="Willey D."/>
            <person name="Hunt A."/>
            <person name="Burton J."/>
            <person name="Sims S."/>
            <person name="McLay K."/>
            <person name="Plumb B."/>
            <person name="Davis J."/>
            <person name="Clee C."/>
            <person name="Oliver K."/>
            <person name="Clark R."/>
            <person name="Riddle C."/>
            <person name="Elliot D."/>
            <person name="Threadgold G."/>
            <person name="Harden G."/>
            <person name="Ware D."/>
            <person name="Begum S."/>
            <person name="Mortimore B."/>
            <person name="Kerry G."/>
            <person name="Heath P."/>
            <person name="Phillimore B."/>
            <person name="Tracey A."/>
            <person name="Corby N."/>
            <person name="Dunn M."/>
            <person name="Johnson C."/>
            <person name="Wood J."/>
            <person name="Clark S."/>
            <person name="Pelan S."/>
            <person name="Griffiths G."/>
            <person name="Smith M."/>
            <person name="Glithero R."/>
            <person name="Howden P."/>
            <person name="Barker N."/>
            <person name="Lloyd C."/>
            <person name="Stevens C."/>
            <person name="Harley J."/>
            <person name="Holt K."/>
            <person name="Panagiotidis G."/>
            <person name="Lovell J."/>
            <person name="Beasley H."/>
            <person name="Henderson C."/>
            <person name="Gordon D."/>
            <person name="Auger K."/>
            <person name="Wright D."/>
            <person name="Collins J."/>
            <person name="Raisen C."/>
            <person name="Dyer L."/>
            <person name="Leung K."/>
            <person name="Robertson L."/>
            <person name="Ambridge K."/>
            <person name="Leongamornlert D."/>
            <person name="McGuire S."/>
            <person name="Gilderthorp R."/>
            <person name="Griffiths C."/>
            <person name="Manthravadi D."/>
            <person name="Nichol S."/>
            <person name="Barker G."/>
            <person name="Whitehead S."/>
            <person name="Kay M."/>
            <person name="Brown J."/>
            <person name="Murnane C."/>
            <person name="Gray E."/>
            <person name="Humphries M."/>
            <person name="Sycamore N."/>
            <person name="Barker D."/>
            <person name="Saunders D."/>
            <person name="Wallis J."/>
            <person name="Babbage A."/>
            <person name="Hammond S."/>
            <person name="Mashreghi-Mohammadi M."/>
            <person name="Barr L."/>
            <person name="Martin S."/>
            <person name="Wray P."/>
            <person name="Ellington A."/>
            <person name="Matthews N."/>
            <person name="Ellwood M."/>
            <person name="Woodmansey R."/>
            <person name="Clark G."/>
            <person name="Cooper J."/>
            <person name="Tromans A."/>
            <person name="Grafham D."/>
            <person name="Skuce C."/>
            <person name="Pandian R."/>
            <person name="Andrews R."/>
            <person name="Harrison E."/>
            <person name="Kimberley A."/>
            <person name="Garnett J."/>
            <person name="Fosker N."/>
            <person name="Hall R."/>
            <person name="Garner P."/>
            <person name="Kelly D."/>
            <person name="Bird C."/>
            <person name="Palmer S."/>
            <person name="Gehring I."/>
            <person name="Berger A."/>
            <person name="Dooley C.M."/>
            <person name="Ersan-Urun Z."/>
            <person name="Eser C."/>
            <person name="Geiger H."/>
            <person name="Geisler M."/>
            <person name="Karotki L."/>
            <person name="Kirn A."/>
            <person name="Konantz J."/>
            <person name="Konantz M."/>
            <person name="Oberlander M."/>
            <person name="Rudolph-Geiger S."/>
            <person name="Teucke M."/>
            <person name="Lanz C."/>
            <person name="Raddatz G."/>
            <person name="Osoegawa K."/>
            <person name="Zhu B."/>
            <person name="Rapp A."/>
            <person name="Widaa S."/>
            <person name="Langford C."/>
            <person name="Yang F."/>
            <person name="Schuster S.C."/>
            <person name="Carter N.P."/>
            <person name="Harrow J."/>
            <person name="Ning Z."/>
            <person name="Herrero J."/>
            <person name="Searle S.M."/>
            <person name="Enright A."/>
            <person name="Geisler R."/>
            <person name="Plasterk R.H."/>
            <person name="Lee C."/>
            <person name="Westerfield M."/>
            <person name="de Jong P.J."/>
            <person name="Zon L.I."/>
            <person name="Postlethwait J.H."/>
            <person name="Nusslein-Volhard C."/>
            <person name="Hubbard T.J."/>
            <person name="Roest Crollius H."/>
            <person name="Rogers J."/>
            <person name="Stemple D.L."/>
        </authorList>
    </citation>
    <scope>NUCLEOTIDE SEQUENCE [LARGE SCALE GENOMIC DNA]</scope>
    <source>
        <strain>Tuebingen</strain>
    </source>
</reference>
<reference key="2">
    <citation type="submission" date="2004-07" db="EMBL/GenBank/DDBJ databases">
        <authorList>
            <consortium name="NIH - Zebrafish Gene Collection (ZGC) project"/>
        </authorList>
    </citation>
    <scope>NUCLEOTIDE SEQUENCE [LARGE SCALE MRNA]</scope>
    <source>
        <tissue>Embryo</tissue>
    </source>
</reference>
<sequence>MSYQYGQGYSGPGGNAPQWQQPPRAPYAGGPAAGQYGSPYGSAPPGQQYGGGSPYGSYGQPGPRAPYGGGQAPGGPYGGYGQPQGGPYRQQGSAGNVPPGVNPEAYQWFSTVDSDQSGYINAKELKQALMNFNNSSFNDETCIMMLNMFDKTKSGRVDVFGFSALWTFLQQWRAAFQQFDRDRSGSINTNEMHQALSQMGYNLSPQFIQELVNRYSVRGGTGVLQLDRFIQVCTQLQSMTQAFREKDTGMTGNVRMSYEDFLSSAITRLM</sequence>
<proteinExistence type="evidence at transcript level"/>
<evidence type="ECO:0000250" key="1">
    <source>
        <dbReference type="UniProtKB" id="Q641Z8"/>
    </source>
</evidence>
<evidence type="ECO:0000250" key="2">
    <source>
        <dbReference type="UniProtKB" id="Q9UBV8"/>
    </source>
</evidence>
<evidence type="ECO:0000255" key="3">
    <source>
        <dbReference type="PROSITE-ProRule" id="PRU00448"/>
    </source>
</evidence>
<evidence type="ECO:0000256" key="4">
    <source>
        <dbReference type="SAM" id="MobiDB-lite"/>
    </source>
</evidence>
<evidence type="ECO:0000303" key="5">
    <source ref="2"/>
</evidence>
<evidence type="ECO:0000305" key="6"/>
<accession>Q6DC93</accession>
<gene>
    <name evidence="2" type="primary">pef1</name>
    <name evidence="5" type="ORF">zgc:100787</name>
</gene>
<comment type="function">
    <text evidence="1 2">Calcium-binding protein that acts as an adapter that bridges unrelated proteins or stabilizes weak protein-protein complexes in response to calcium. Acts as a negative regulator of ER-Golgi transport (By similarity).</text>
</comment>
<comment type="subunit">
    <text evidence="2">Heterodimer; heterodimerizes (via the EF-hand 5) with pdcd6.</text>
</comment>
<comment type="subcellular location">
    <subcellularLocation>
        <location evidence="2">Cytoplasm</location>
    </subcellularLocation>
    <subcellularLocation>
        <location evidence="1">Endoplasmic reticulum</location>
    </subcellularLocation>
    <subcellularLocation>
        <location evidence="2">Membrane</location>
        <topology evidence="2">Peripheral membrane protein</topology>
    </subcellularLocation>
    <subcellularLocation>
        <location evidence="2">Cytoplasmic vesicle</location>
        <location evidence="2">COPII-coated vesicle membrane</location>
        <topology evidence="2">Peripheral membrane protein</topology>
    </subcellularLocation>
</comment>
<dbReference type="EMBL" id="CR318592">
    <property type="protein sequence ID" value="CAK04964.1"/>
    <property type="molecule type" value="Genomic_DNA"/>
</dbReference>
<dbReference type="EMBL" id="BC078183">
    <property type="protein sequence ID" value="AAH78183.1"/>
    <property type="molecule type" value="mRNA"/>
</dbReference>
<dbReference type="RefSeq" id="NP_001003643.1">
    <property type="nucleotide sequence ID" value="NM_001003643.1"/>
</dbReference>
<dbReference type="SMR" id="Q6DC93"/>
<dbReference type="FunCoup" id="Q6DC93">
    <property type="interactions" value="698"/>
</dbReference>
<dbReference type="STRING" id="7955.ENSDARP00000033243"/>
<dbReference type="PaxDb" id="7955-ENSDARP00000033243"/>
<dbReference type="Ensembl" id="ENSDART00000032341">
    <property type="protein sequence ID" value="ENSDARP00000033243"/>
    <property type="gene ID" value="ENSDARG00000023989"/>
</dbReference>
<dbReference type="GeneID" id="445249"/>
<dbReference type="KEGG" id="dre:445249"/>
<dbReference type="AGR" id="ZFIN:ZDB-GENE-040801-259"/>
<dbReference type="CTD" id="553115"/>
<dbReference type="ZFIN" id="ZDB-GENE-040801-259">
    <property type="gene designation" value="pef1"/>
</dbReference>
<dbReference type="eggNOG" id="KOG0037">
    <property type="taxonomic scope" value="Eukaryota"/>
</dbReference>
<dbReference type="HOGENOM" id="CLU_051357_1_0_1"/>
<dbReference type="InParanoid" id="Q6DC93"/>
<dbReference type="OMA" id="YNKSYNP"/>
<dbReference type="OrthoDB" id="10248537at2759"/>
<dbReference type="PhylomeDB" id="Q6DC93"/>
<dbReference type="TreeFam" id="TF314682"/>
<dbReference type="PRO" id="PR:Q6DC93"/>
<dbReference type="Proteomes" id="UP000000437">
    <property type="component" value="Chromosome 19"/>
</dbReference>
<dbReference type="Bgee" id="ENSDARG00000023989">
    <property type="expression patterns" value="Expressed in mature ovarian follicle and 26 other cell types or tissues"/>
</dbReference>
<dbReference type="GO" id="GO:0030127">
    <property type="term" value="C:COPII vesicle coat"/>
    <property type="evidence" value="ECO:0000250"/>
    <property type="project" value="UniProtKB"/>
</dbReference>
<dbReference type="GO" id="GO:0031463">
    <property type="term" value="C:Cul3-RING ubiquitin ligase complex"/>
    <property type="evidence" value="ECO:0000250"/>
    <property type="project" value="UniProtKB"/>
</dbReference>
<dbReference type="GO" id="GO:0005783">
    <property type="term" value="C:endoplasmic reticulum"/>
    <property type="evidence" value="ECO:0007669"/>
    <property type="project" value="UniProtKB-SubCell"/>
</dbReference>
<dbReference type="GO" id="GO:0005509">
    <property type="term" value="F:calcium ion binding"/>
    <property type="evidence" value="ECO:0007669"/>
    <property type="project" value="InterPro"/>
</dbReference>
<dbReference type="GO" id="GO:0048306">
    <property type="term" value="F:calcium-dependent protein binding"/>
    <property type="evidence" value="ECO:0007669"/>
    <property type="project" value="UniProtKB-ARBA"/>
</dbReference>
<dbReference type="GO" id="GO:1990756">
    <property type="term" value="F:ubiquitin-like ligase-substrate adaptor activity"/>
    <property type="evidence" value="ECO:0000250"/>
    <property type="project" value="UniProtKB"/>
</dbReference>
<dbReference type="GO" id="GO:0048208">
    <property type="term" value="P:COPII vesicle coating"/>
    <property type="evidence" value="ECO:0000250"/>
    <property type="project" value="UniProtKB"/>
</dbReference>
<dbReference type="GO" id="GO:0006888">
    <property type="term" value="P:endoplasmic reticulum to Golgi vesicle-mediated transport"/>
    <property type="evidence" value="ECO:0000250"/>
    <property type="project" value="UniProtKB"/>
</dbReference>
<dbReference type="GO" id="GO:0014032">
    <property type="term" value="P:neural crest cell development"/>
    <property type="evidence" value="ECO:0000250"/>
    <property type="project" value="UniProtKB"/>
</dbReference>
<dbReference type="GO" id="GO:0014029">
    <property type="term" value="P:neural crest formation"/>
    <property type="evidence" value="ECO:0000250"/>
    <property type="project" value="UniProtKB"/>
</dbReference>
<dbReference type="GO" id="GO:1902527">
    <property type="term" value="P:positive regulation of protein monoubiquitination"/>
    <property type="evidence" value="ECO:0000250"/>
    <property type="project" value="UniProtKB"/>
</dbReference>
<dbReference type="CDD" id="cd16184">
    <property type="entry name" value="EFh_PEF_peflin"/>
    <property type="match status" value="1"/>
</dbReference>
<dbReference type="FunFam" id="1.10.238.10:FF:000139">
    <property type="entry name" value="Peflin isoform 1"/>
    <property type="match status" value="1"/>
</dbReference>
<dbReference type="Gene3D" id="1.10.238.10">
    <property type="entry name" value="EF-hand"/>
    <property type="match status" value="1"/>
</dbReference>
<dbReference type="InterPro" id="IPR011992">
    <property type="entry name" value="EF-hand-dom_pair"/>
</dbReference>
<dbReference type="InterPro" id="IPR018247">
    <property type="entry name" value="EF_Hand_1_Ca_BS"/>
</dbReference>
<dbReference type="InterPro" id="IPR002048">
    <property type="entry name" value="EF_hand_dom"/>
</dbReference>
<dbReference type="InterPro" id="IPR051426">
    <property type="entry name" value="Peflin/Sorcin_CaBP"/>
</dbReference>
<dbReference type="PANTHER" id="PTHR46212">
    <property type="entry name" value="PEFLIN"/>
    <property type="match status" value="1"/>
</dbReference>
<dbReference type="PANTHER" id="PTHR46212:SF10">
    <property type="entry name" value="PEFLIN"/>
    <property type="match status" value="1"/>
</dbReference>
<dbReference type="Pfam" id="PF13499">
    <property type="entry name" value="EF-hand_7"/>
    <property type="match status" value="2"/>
</dbReference>
<dbReference type="SMART" id="SM00054">
    <property type="entry name" value="EFh"/>
    <property type="match status" value="3"/>
</dbReference>
<dbReference type="SUPFAM" id="SSF47473">
    <property type="entry name" value="EF-hand"/>
    <property type="match status" value="1"/>
</dbReference>
<dbReference type="PROSITE" id="PS00018">
    <property type="entry name" value="EF_HAND_1"/>
    <property type="match status" value="2"/>
</dbReference>
<dbReference type="PROSITE" id="PS50222">
    <property type="entry name" value="EF_HAND_2"/>
    <property type="match status" value="2"/>
</dbReference>
<feature type="chain" id="PRO_0000247048" description="Peflin">
    <location>
        <begin position="1"/>
        <end position="270"/>
    </location>
</feature>
<feature type="repeat" description="1">
    <location>
        <begin position="22"/>
        <end position="30"/>
    </location>
</feature>
<feature type="repeat" description="2">
    <location>
        <begin position="44"/>
        <end position="54"/>
    </location>
</feature>
<feature type="repeat" description="3">
    <location>
        <begin position="62"/>
        <end position="70"/>
    </location>
</feature>
<feature type="repeat" description="4">
    <location>
        <begin position="72"/>
        <end position="81"/>
    </location>
</feature>
<feature type="repeat" description="5">
    <location>
        <begin position="83"/>
        <end position="91"/>
    </location>
</feature>
<feature type="domain" description="EF-hand 1" evidence="3">
    <location>
        <begin position="100"/>
        <end position="135"/>
    </location>
</feature>
<feature type="domain" description="EF-hand 2" evidence="6">
    <location>
        <begin position="141"/>
        <end position="169"/>
    </location>
</feature>
<feature type="domain" description="EF-hand 3" evidence="3">
    <location>
        <begin position="170"/>
        <end position="202"/>
    </location>
</feature>
<feature type="domain" description="EF-hand 4" evidence="6">
    <location>
        <begin position="203"/>
        <end position="239"/>
    </location>
</feature>
<feature type="domain" description="EF-hand 5" evidence="6">
    <location>
        <begin position="240"/>
        <end position="269"/>
    </location>
</feature>
<feature type="region of interest" description="Disordered" evidence="4">
    <location>
        <begin position="1"/>
        <end position="97"/>
    </location>
</feature>
<feature type="region of interest" description="5 X 9 AA approximate tandem repeat of [AP]-P-G-G-P-Y-G-G-P-P">
    <location>
        <begin position="22"/>
        <end position="91"/>
    </location>
</feature>
<feature type="compositionally biased region" description="Low complexity" evidence="4">
    <location>
        <begin position="26"/>
        <end position="47"/>
    </location>
</feature>
<feature type="compositionally biased region" description="Low complexity" evidence="4">
    <location>
        <begin position="55"/>
        <end position="66"/>
    </location>
</feature>
<feature type="compositionally biased region" description="Gly residues" evidence="4">
    <location>
        <begin position="67"/>
        <end position="84"/>
    </location>
</feature>
<feature type="binding site" evidence="3">
    <location>
        <position position="113"/>
    </location>
    <ligand>
        <name>Ca(2+)</name>
        <dbReference type="ChEBI" id="CHEBI:29108"/>
        <label>1</label>
    </ligand>
</feature>
<feature type="binding site" evidence="3">
    <location>
        <position position="115"/>
    </location>
    <ligand>
        <name>Ca(2+)</name>
        <dbReference type="ChEBI" id="CHEBI:29108"/>
        <label>1</label>
    </ligand>
</feature>
<feature type="binding site" evidence="3">
    <location>
        <position position="117"/>
    </location>
    <ligand>
        <name>Ca(2+)</name>
        <dbReference type="ChEBI" id="CHEBI:29108"/>
        <label>1</label>
    </ligand>
</feature>
<feature type="binding site" evidence="3">
    <location>
        <position position="119"/>
    </location>
    <ligand>
        <name>Ca(2+)</name>
        <dbReference type="ChEBI" id="CHEBI:29108"/>
        <label>1</label>
    </ligand>
</feature>
<feature type="binding site" evidence="3">
    <location>
        <position position="124"/>
    </location>
    <ligand>
        <name>Ca(2+)</name>
        <dbReference type="ChEBI" id="CHEBI:29108"/>
        <label>1</label>
    </ligand>
</feature>
<feature type="binding site" evidence="3">
    <location>
        <position position="180"/>
    </location>
    <ligand>
        <name>Ca(2+)</name>
        <dbReference type="ChEBI" id="CHEBI:29108"/>
        <label>2</label>
    </ligand>
</feature>
<feature type="binding site" evidence="3">
    <location>
        <position position="182"/>
    </location>
    <ligand>
        <name>Ca(2+)</name>
        <dbReference type="ChEBI" id="CHEBI:29108"/>
        <label>2</label>
    </ligand>
</feature>
<feature type="binding site" evidence="3">
    <location>
        <position position="184"/>
    </location>
    <ligand>
        <name>Ca(2+)</name>
        <dbReference type="ChEBI" id="CHEBI:29108"/>
        <label>2</label>
    </ligand>
</feature>
<feature type="binding site" evidence="3">
    <location>
        <position position="186"/>
    </location>
    <ligand>
        <name>Ca(2+)</name>
        <dbReference type="ChEBI" id="CHEBI:29108"/>
        <label>2</label>
    </ligand>
</feature>
<feature type="binding site" evidence="3">
    <location>
        <position position="191"/>
    </location>
    <ligand>
        <name>Ca(2+)</name>
        <dbReference type="ChEBI" id="CHEBI:29108"/>
        <label>2</label>
    </ligand>
</feature>
<organism>
    <name type="scientific">Danio rerio</name>
    <name type="common">Zebrafish</name>
    <name type="synonym">Brachydanio rerio</name>
    <dbReference type="NCBI Taxonomy" id="7955"/>
    <lineage>
        <taxon>Eukaryota</taxon>
        <taxon>Metazoa</taxon>
        <taxon>Chordata</taxon>
        <taxon>Craniata</taxon>
        <taxon>Vertebrata</taxon>
        <taxon>Euteleostomi</taxon>
        <taxon>Actinopterygii</taxon>
        <taxon>Neopterygii</taxon>
        <taxon>Teleostei</taxon>
        <taxon>Ostariophysi</taxon>
        <taxon>Cypriniformes</taxon>
        <taxon>Danionidae</taxon>
        <taxon>Danioninae</taxon>
        <taxon>Danio</taxon>
    </lineage>
</organism>
<name>PEF1_DANRE</name>
<protein>
    <recommendedName>
        <fullName evidence="2">Peflin</fullName>
    </recommendedName>
    <alternativeName>
        <fullName evidence="2">PEF protein with a long N-terminal hydrophobic domain</fullName>
    </alternativeName>
    <alternativeName>
        <fullName evidence="2">Penta-EF hand domain-containing protein 1</fullName>
    </alternativeName>
</protein>
<keyword id="KW-0106">Calcium</keyword>
<keyword id="KW-0963">Cytoplasm</keyword>
<keyword id="KW-0968">Cytoplasmic vesicle</keyword>
<keyword id="KW-0256">Endoplasmic reticulum</keyword>
<keyword id="KW-0472">Membrane</keyword>
<keyword id="KW-0479">Metal-binding</keyword>
<keyword id="KW-1185">Reference proteome</keyword>
<keyword id="KW-0677">Repeat</keyword>